<dbReference type="EC" id="2.3.1.1"/>
<dbReference type="EMBL" id="DS231630">
    <property type="protein sequence ID" value="EDU44200.1"/>
    <property type="molecule type" value="Genomic_DNA"/>
</dbReference>
<dbReference type="RefSeq" id="XP_001941481.1">
    <property type="nucleotide sequence ID" value="XM_001941446.1"/>
</dbReference>
<dbReference type="SMR" id="B2WME0"/>
<dbReference type="FunCoup" id="B2WME0">
    <property type="interactions" value="98"/>
</dbReference>
<dbReference type="STRING" id="426418.B2WME0"/>
<dbReference type="EnsemblFungi" id="EDU44200">
    <property type="protein sequence ID" value="EDU44200"/>
    <property type="gene ID" value="PTRG_11150"/>
</dbReference>
<dbReference type="GeneID" id="6349462"/>
<dbReference type="KEGG" id="ptrr:6349462"/>
<dbReference type="eggNOG" id="KOG2436">
    <property type="taxonomic scope" value="Eukaryota"/>
</dbReference>
<dbReference type="HOGENOM" id="CLU_013088_0_0_1"/>
<dbReference type="InParanoid" id="B2WME0"/>
<dbReference type="OMA" id="NAMVRDC"/>
<dbReference type="OrthoDB" id="28932at28556"/>
<dbReference type="UniPathway" id="UPA00068">
    <property type="reaction ID" value="UER00106"/>
</dbReference>
<dbReference type="Proteomes" id="UP000001471">
    <property type="component" value="Unassembled WGS sequence"/>
</dbReference>
<dbReference type="GO" id="GO:0005759">
    <property type="term" value="C:mitochondrial matrix"/>
    <property type="evidence" value="ECO:0007669"/>
    <property type="project" value="TreeGrafter"/>
</dbReference>
<dbReference type="GO" id="GO:0004042">
    <property type="term" value="F:L-glutamate N-acetyltransferase activity"/>
    <property type="evidence" value="ECO:0007669"/>
    <property type="project" value="InterPro"/>
</dbReference>
<dbReference type="GO" id="GO:0006526">
    <property type="term" value="P:L-arginine biosynthetic process"/>
    <property type="evidence" value="ECO:0007669"/>
    <property type="project" value="UniProtKB-UniPathway"/>
</dbReference>
<dbReference type="GO" id="GO:0006592">
    <property type="term" value="P:ornithine biosynthetic process"/>
    <property type="evidence" value="ECO:0007669"/>
    <property type="project" value="TreeGrafter"/>
</dbReference>
<dbReference type="FunFam" id="3.40.630.30:FF:000049">
    <property type="entry name" value="Amino-acid acetyltransferase, mitochondrial"/>
    <property type="match status" value="1"/>
</dbReference>
<dbReference type="Gene3D" id="3.40.630.30">
    <property type="match status" value="1"/>
</dbReference>
<dbReference type="Gene3D" id="3.40.1160.10">
    <property type="entry name" value="Acetylglutamate kinase-like"/>
    <property type="match status" value="1"/>
</dbReference>
<dbReference type="InterPro" id="IPR036393">
    <property type="entry name" value="AceGlu_kinase-like_sf"/>
</dbReference>
<dbReference type="InterPro" id="IPR011190">
    <property type="entry name" value="GlcNAc_Synth_fun"/>
</dbReference>
<dbReference type="InterPro" id="IPR006855">
    <property type="entry name" value="Vertebrate-like_GNAT_dom"/>
</dbReference>
<dbReference type="PANTHER" id="PTHR23342:SF4">
    <property type="entry name" value="AMINO-ACID ACETYLTRANSFERASE, MITOCHONDRIAL"/>
    <property type="match status" value="1"/>
</dbReference>
<dbReference type="PANTHER" id="PTHR23342">
    <property type="entry name" value="N-ACETYLGLUTAMATE SYNTHASE"/>
    <property type="match status" value="1"/>
</dbReference>
<dbReference type="Pfam" id="PF04768">
    <property type="entry name" value="NAT"/>
    <property type="match status" value="1"/>
</dbReference>
<dbReference type="PIRSF" id="PIRSF007892">
    <property type="entry name" value="NAGS_fungal"/>
    <property type="match status" value="1"/>
</dbReference>
<dbReference type="PROSITE" id="PS51731">
    <property type="entry name" value="GNAT_NAGS"/>
    <property type="match status" value="1"/>
</dbReference>
<evidence type="ECO:0000250" key="1"/>
<evidence type="ECO:0000255" key="2"/>
<evidence type="ECO:0000255" key="3">
    <source>
        <dbReference type="PROSITE-ProRule" id="PRU00532"/>
    </source>
</evidence>
<evidence type="ECO:0000256" key="4">
    <source>
        <dbReference type="SAM" id="MobiDB-lite"/>
    </source>
</evidence>
<evidence type="ECO:0000305" key="5"/>
<reference key="1">
    <citation type="journal article" date="2013" name="G3 (Bethesda)">
        <title>Comparative genomics of a plant-pathogenic fungus, Pyrenophora tritici-repentis, reveals transduplication and the impact of repeat elements on pathogenicity and population divergence.</title>
        <authorList>
            <person name="Manning V.A."/>
            <person name="Pandelova I."/>
            <person name="Dhillon B."/>
            <person name="Wilhelm L.J."/>
            <person name="Goodwin S.B."/>
            <person name="Berlin A.M."/>
            <person name="Figueroa M."/>
            <person name="Freitag M."/>
            <person name="Hane J.K."/>
            <person name="Henrissat B."/>
            <person name="Holman W.H."/>
            <person name="Kodira C.D."/>
            <person name="Martin J."/>
            <person name="Oliver R.P."/>
            <person name="Robbertse B."/>
            <person name="Schackwitz W."/>
            <person name="Schwartz D.C."/>
            <person name="Spatafora J.W."/>
            <person name="Turgeon B.G."/>
            <person name="Yandava C."/>
            <person name="Young S."/>
            <person name="Zhou S."/>
            <person name="Zeng Q."/>
            <person name="Grigoriev I.V."/>
            <person name="Ma L.-J."/>
            <person name="Ciuffetti L.M."/>
        </authorList>
    </citation>
    <scope>NUCLEOTIDE SEQUENCE [LARGE SCALE GENOMIC DNA]</scope>
    <source>
        <strain>Pt-1C-BFP</strain>
    </source>
</reference>
<proteinExistence type="inferred from homology"/>
<organism>
    <name type="scientific">Pyrenophora tritici-repentis (strain Pt-1C-BFP)</name>
    <name type="common">Wheat tan spot fungus</name>
    <name type="synonym">Drechslera tritici-repentis</name>
    <dbReference type="NCBI Taxonomy" id="426418"/>
    <lineage>
        <taxon>Eukaryota</taxon>
        <taxon>Fungi</taxon>
        <taxon>Dikarya</taxon>
        <taxon>Ascomycota</taxon>
        <taxon>Pezizomycotina</taxon>
        <taxon>Dothideomycetes</taxon>
        <taxon>Pleosporomycetidae</taxon>
        <taxon>Pleosporales</taxon>
        <taxon>Pleosporineae</taxon>
        <taxon>Pleosporaceae</taxon>
        <taxon>Pyrenophora</taxon>
    </lineage>
</organism>
<accession>B2WME0</accession>
<sequence length="717" mass="79162">MFIWTKAPARGLGKASKILPKRDDTQKVFETTHHKQFHTATTSVRRSSSSAKERQRAERQQLTRLLKESPGKRDARNFLKQFDVPKKSKASITAKAKELVSENIHNDLASLRTGVNLGDLYKPTVFTREPLPEESYDAEKDEPVHLALVKLRQPQKLTDRTLGDIALTLSQMARLGLSTAVVLDCDEDTSTHSIEVKPEYGNMVREQALRLVAALEDYNEPGSLLVEDVLGYSPLDNDMPSTNQVRGGVEVQHTYLLFPPIDDGVIPVIAPFAYDENLKKVRVQADDVLLALVREFAGLGHSNGMESPRGSLHKTKRVVERPLLDRIIILDPLGGIPSENRADGAHVFVNLEAEYRDIKKELQQLSSKTSNGAGSPTSLSTGNPLSKFVEQEVVSLPGVQSENLASSAPVRHLKNLDVLERGLKLLPPSSSGLILTPMEAATKAIPDDARTTPSKNPLLHNLLTDKPMTSSSLPTSPTSRFLGSAAPNPATFLKKGIPLTMIPDPRVHGPWQPPSASNPSIELADDPRINFPKLVDLIDDSFQRKLHPKNYLDRIHGRVAGIIIAGDYEGGAICTWETPKSLQGATPPSVLTPDSPYWIPYLDKFAVLTSSQGSGGVSDIVWAALTRTCFPDGVVWRSRTSNPVNKWYQERSMGMWKLPGDQWTMFWTTEGIVGGWEQGKWGDVDDAKKRDMKRWDACIDVCSGIEPSWADGIQRDD</sequence>
<protein>
    <recommendedName>
        <fullName>Amino-acid acetyltransferase, mitochondrial</fullName>
        <ecNumber>2.3.1.1</ecNumber>
    </recommendedName>
    <alternativeName>
        <fullName>Arginine-requiring protein 2</fullName>
    </alternativeName>
    <alternativeName>
        <fullName>Glutamate N-acetyltransferase</fullName>
    </alternativeName>
    <alternativeName>
        <fullName>N-acetylglutamate synthase</fullName>
        <shortName>AGS</shortName>
        <shortName>NAGS</shortName>
    </alternativeName>
</protein>
<name>NAGS_PYRTR</name>
<gene>
    <name type="primary">arg2</name>
    <name type="ORF">PTRG_11150</name>
</gene>
<comment type="function">
    <text evidence="1">N-acetylglutamate synthase involved in arginine biosynthesis.</text>
</comment>
<comment type="catalytic activity">
    <reaction>
        <text>L-glutamate + acetyl-CoA = N-acetyl-L-glutamate + CoA + H(+)</text>
        <dbReference type="Rhea" id="RHEA:24292"/>
        <dbReference type="ChEBI" id="CHEBI:15378"/>
        <dbReference type="ChEBI" id="CHEBI:29985"/>
        <dbReference type="ChEBI" id="CHEBI:44337"/>
        <dbReference type="ChEBI" id="CHEBI:57287"/>
        <dbReference type="ChEBI" id="CHEBI:57288"/>
        <dbReference type="EC" id="2.3.1.1"/>
    </reaction>
</comment>
<comment type="pathway">
    <text>Amino-acid biosynthesis; L-arginine biosynthesis; N(2)-acetyl-L-ornithine from L-glutamate: step 1/4.</text>
</comment>
<comment type="subcellular location">
    <subcellularLocation>
        <location evidence="1">Mitochondrion</location>
    </subcellularLocation>
</comment>
<comment type="similarity">
    <text evidence="5">Belongs to the acetyltransferase family.</text>
</comment>
<feature type="transit peptide" description="Mitochondrion" evidence="2">
    <location>
        <begin position="1"/>
        <end position="23"/>
    </location>
</feature>
<feature type="chain" id="PRO_0000372577" description="Amino-acid acetyltransferase, mitochondrial">
    <location>
        <begin position="24"/>
        <end position="717"/>
    </location>
</feature>
<feature type="domain" description="N-acetyltransferase" evidence="3">
    <location>
        <begin position="518"/>
        <end position="691"/>
    </location>
</feature>
<feature type="region of interest" description="Disordered" evidence="4">
    <location>
        <begin position="35"/>
        <end position="70"/>
    </location>
</feature>
<feature type="compositionally biased region" description="Low complexity" evidence="4">
    <location>
        <begin position="39"/>
        <end position="50"/>
    </location>
</feature>
<feature type="compositionally biased region" description="Basic and acidic residues" evidence="4">
    <location>
        <begin position="51"/>
        <end position="70"/>
    </location>
</feature>
<keyword id="KW-0012">Acyltransferase</keyword>
<keyword id="KW-0028">Amino-acid biosynthesis</keyword>
<keyword id="KW-0496">Mitochondrion</keyword>
<keyword id="KW-1185">Reference proteome</keyword>
<keyword id="KW-0808">Transferase</keyword>
<keyword id="KW-0809">Transit peptide</keyword>